<keyword id="KW-0150">Chloroplast</keyword>
<keyword id="KW-0472">Membrane</keyword>
<keyword id="KW-0602">Photosynthesis</keyword>
<keyword id="KW-0604">Photosystem II</keyword>
<keyword id="KW-0934">Plastid</keyword>
<keyword id="KW-0674">Reaction center</keyword>
<keyword id="KW-1185">Reference proteome</keyword>
<keyword id="KW-0793">Thylakoid</keyword>
<keyword id="KW-0812">Transmembrane</keyword>
<keyword id="KW-1133">Transmembrane helix</keyword>
<sequence>MLTLKLFVYTVVIFFVSLFIFGFLSNDPGRNPGREE</sequence>
<feature type="chain" id="PRO_0000275812" description="Photosystem II reaction center protein I">
    <location>
        <begin position="1"/>
        <end position="36"/>
    </location>
</feature>
<feature type="transmembrane region" description="Helical" evidence="1">
    <location>
        <begin position="4"/>
        <end position="24"/>
    </location>
</feature>
<accession>A1E9Q8</accession>
<protein>
    <recommendedName>
        <fullName evidence="1">Photosystem II reaction center protein I</fullName>
        <shortName evidence="1">PSII-I</shortName>
    </recommendedName>
    <alternativeName>
        <fullName evidence="1">PSII 4.8 kDa protein</fullName>
    </alternativeName>
</protein>
<proteinExistence type="inferred from homology"/>
<comment type="function">
    <text evidence="1">One of the components of the core complex of photosystem II (PSII), required for its stability and/or assembly. PSII is a light-driven water:plastoquinone oxidoreductase that uses light energy to abstract electrons from H(2)O, generating O(2) and a proton gradient subsequently used for ATP formation. It consists of a core antenna complex that captures photons, and an electron transfer chain that converts photonic excitation into a charge separation.</text>
</comment>
<comment type="subunit">
    <text evidence="1">PSII is composed of 1 copy each of membrane proteins PsbA, PsbB, PsbC, PsbD, PsbE, PsbF, PsbH, PsbI, PsbJ, PsbK, PsbL, PsbM, PsbT, PsbX, PsbY, PsbZ, Psb30/Ycf12, at least 3 peripheral proteins of the oxygen-evolving complex and a large number of cofactors. It forms dimeric complexes.</text>
</comment>
<comment type="subcellular location">
    <subcellularLocation>
        <location evidence="1">Plastid</location>
        <location evidence="1">Chloroplast thylakoid membrane</location>
        <topology evidence="1">Single-pass membrane protein</topology>
    </subcellularLocation>
</comment>
<comment type="similarity">
    <text evidence="1">Belongs to the PsbI family.</text>
</comment>
<geneLocation type="chloroplast"/>
<reference key="1">
    <citation type="journal article" date="2007" name="Theor. Appl. Genet.">
        <title>Complete chloroplast genome sequences of Hordeum vulgare, Sorghum bicolor and Agrostis stolonifera, and comparative analyses with other grass genomes.</title>
        <authorList>
            <person name="Saski C."/>
            <person name="Lee S.-B."/>
            <person name="Fjellheim S."/>
            <person name="Guda C."/>
            <person name="Jansen R.K."/>
            <person name="Luo H."/>
            <person name="Tomkins J."/>
            <person name="Rognli O.A."/>
            <person name="Daniell H."/>
            <person name="Clarke J.L."/>
        </authorList>
    </citation>
    <scope>NUCLEOTIDE SEQUENCE [LARGE SCALE GENOMIC DNA]</scope>
    <source>
        <strain>cv. BTx623</strain>
    </source>
</reference>
<evidence type="ECO:0000255" key="1">
    <source>
        <dbReference type="HAMAP-Rule" id="MF_01316"/>
    </source>
</evidence>
<dbReference type="EMBL" id="EF115542">
    <property type="protein sequence ID" value="ABK79480.1"/>
    <property type="molecule type" value="Genomic_DNA"/>
</dbReference>
<dbReference type="RefSeq" id="YP_899391.1">
    <property type="nucleotide sequence ID" value="NC_008602.1"/>
</dbReference>
<dbReference type="SMR" id="A1E9Q8"/>
<dbReference type="FunCoup" id="A1E9Q8">
    <property type="interactions" value="62"/>
</dbReference>
<dbReference type="STRING" id="4558.A1E9Q8"/>
<dbReference type="GeneID" id="4549101"/>
<dbReference type="KEGG" id="sbi:4549101"/>
<dbReference type="InParanoid" id="A1E9Q8"/>
<dbReference type="OrthoDB" id="1855836at2759"/>
<dbReference type="Proteomes" id="UP000000768">
    <property type="component" value="Chloroplast"/>
</dbReference>
<dbReference type="GO" id="GO:0009535">
    <property type="term" value="C:chloroplast thylakoid membrane"/>
    <property type="evidence" value="ECO:0007669"/>
    <property type="project" value="UniProtKB-SubCell"/>
</dbReference>
<dbReference type="GO" id="GO:0009539">
    <property type="term" value="C:photosystem II reaction center"/>
    <property type="evidence" value="ECO:0007669"/>
    <property type="project" value="InterPro"/>
</dbReference>
<dbReference type="GO" id="GO:0015979">
    <property type="term" value="P:photosynthesis"/>
    <property type="evidence" value="ECO:0007669"/>
    <property type="project" value="UniProtKB-UniRule"/>
</dbReference>
<dbReference type="HAMAP" id="MF_01316">
    <property type="entry name" value="PSII_PsbI"/>
    <property type="match status" value="1"/>
</dbReference>
<dbReference type="InterPro" id="IPR003686">
    <property type="entry name" value="PSII_PsbI"/>
</dbReference>
<dbReference type="InterPro" id="IPR037271">
    <property type="entry name" value="PSII_PsbI_sf"/>
</dbReference>
<dbReference type="NCBIfam" id="NF002735">
    <property type="entry name" value="PRK02655.1"/>
    <property type="match status" value="1"/>
</dbReference>
<dbReference type="PANTHER" id="PTHR35772">
    <property type="entry name" value="PHOTOSYSTEM II REACTION CENTER PROTEIN I"/>
    <property type="match status" value="1"/>
</dbReference>
<dbReference type="PANTHER" id="PTHR35772:SF1">
    <property type="entry name" value="PHOTOSYSTEM II REACTION CENTER PROTEIN I"/>
    <property type="match status" value="1"/>
</dbReference>
<dbReference type="Pfam" id="PF02532">
    <property type="entry name" value="PsbI"/>
    <property type="match status" value="1"/>
</dbReference>
<dbReference type="SUPFAM" id="SSF161041">
    <property type="entry name" value="Photosystem II reaction center protein I, PsbI"/>
    <property type="match status" value="1"/>
</dbReference>
<organism>
    <name type="scientific">Sorghum bicolor</name>
    <name type="common">Sorghum</name>
    <name type="synonym">Sorghum vulgare</name>
    <dbReference type="NCBI Taxonomy" id="4558"/>
    <lineage>
        <taxon>Eukaryota</taxon>
        <taxon>Viridiplantae</taxon>
        <taxon>Streptophyta</taxon>
        <taxon>Embryophyta</taxon>
        <taxon>Tracheophyta</taxon>
        <taxon>Spermatophyta</taxon>
        <taxon>Magnoliopsida</taxon>
        <taxon>Liliopsida</taxon>
        <taxon>Poales</taxon>
        <taxon>Poaceae</taxon>
        <taxon>PACMAD clade</taxon>
        <taxon>Panicoideae</taxon>
        <taxon>Andropogonodae</taxon>
        <taxon>Andropogoneae</taxon>
        <taxon>Sorghinae</taxon>
        <taxon>Sorghum</taxon>
    </lineage>
</organism>
<gene>
    <name evidence="1" type="primary">psbI</name>
</gene>
<name>PSBI_SORBI</name>